<organism>
    <name type="scientific">Pectobacterium carotovorum subsp. carotovorum (strain PC1)</name>
    <dbReference type="NCBI Taxonomy" id="561230"/>
    <lineage>
        <taxon>Bacteria</taxon>
        <taxon>Pseudomonadati</taxon>
        <taxon>Pseudomonadota</taxon>
        <taxon>Gammaproteobacteria</taxon>
        <taxon>Enterobacterales</taxon>
        <taxon>Pectobacteriaceae</taxon>
        <taxon>Pectobacterium</taxon>
    </lineage>
</organism>
<proteinExistence type="inferred from homology"/>
<sequence>MTQQYNYHMTRFIISAPDIRHLATDSGIEVAFAGRSNAGKSSALNTLTNQKNLARTSKTPGRTQLINLFEVTDGVRLVDLPGYGYAEVPEQMKIKWQRALGEYLQKRNSLKGLVVLMDIRHPLKDLDQQMIQWAVDVELPVLVLLTKADKLASGARKAQLNMVREAVLPFMGDIQVEAFSSLKKLGVDKLRQKLDNWFSTLEHAEEEQEAE</sequence>
<comment type="function">
    <text evidence="1">Necessary for normal cell division and for the maintenance of normal septation.</text>
</comment>
<comment type="cofactor">
    <cofactor evidence="1">
        <name>Mg(2+)</name>
        <dbReference type="ChEBI" id="CHEBI:18420"/>
    </cofactor>
</comment>
<comment type="similarity">
    <text evidence="1">Belongs to the TRAFAC class TrmE-Era-EngA-EngB-Septin-like GTPase superfamily. EngB GTPase family.</text>
</comment>
<accession>C6DJE1</accession>
<name>ENGB_PECCP</name>
<reference key="1">
    <citation type="submission" date="2009-07" db="EMBL/GenBank/DDBJ databases">
        <title>Complete sequence of Pectobacterium carotovorum subsp. carotovorum PC1.</title>
        <authorList>
            <consortium name="US DOE Joint Genome Institute"/>
            <person name="Lucas S."/>
            <person name="Copeland A."/>
            <person name="Lapidus A."/>
            <person name="Glavina del Rio T."/>
            <person name="Tice H."/>
            <person name="Bruce D."/>
            <person name="Goodwin L."/>
            <person name="Pitluck S."/>
            <person name="Munk A.C."/>
            <person name="Brettin T."/>
            <person name="Detter J.C."/>
            <person name="Han C."/>
            <person name="Tapia R."/>
            <person name="Larimer F."/>
            <person name="Land M."/>
            <person name="Hauser L."/>
            <person name="Kyrpides N."/>
            <person name="Mikhailova N."/>
            <person name="Balakrishnan V."/>
            <person name="Glasner J."/>
            <person name="Perna N.T."/>
        </authorList>
    </citation>
    <scope>NUCLEOTIDE SEQUENCE [LARGE SCALE GENOMIC DNA]</scope>
    <source>
        <strain>PC1</strain>
    </source>
</reference>
<gene>
    <name evidence="1" type="primary">engB</name>
    <name type="ordered locus">PC1_4226</name>
</gene>
<dbReference type="EMBL" id="CP001657">
    <property type="protein sequence ID" value="ACT15240.1"/>
    <property type="molecule type" value="Genomic_DNA"/>
</dbReference>
<dbReference type="SMR" id="C6DJE1"/>
<dbReference type="STRING" id="561230.PC1_4226"/>
<dbReference type="KEGG" id="pct:PC1_4226"/>
<dbReference type="eggNOG" id="COG0218">
    <property type="taxonomic scope" value="Bacteria"/>
</dbReference>
<dbReference type="HOGENOM" id="CLU_033732_1_0_6"/>
<dbReference type="OrthoDB" id="9804921at2"/>
<dbReference type="Proteomes" id="UP000002736">
    <property type="component" value="Chromosome"/>
</dbReference>
<dbReference type="GO" id="GO:0005829">
    <property type="term" value="C:cytosol"/>
    <property type="evidence" value="ECO:0007669"/>
    <property type="project" value="TreeGrafter"/>
</dbReference>
<dbReference type="GO" id="GO:0005525">
    <property type="term" value="F:GTP binding"/>
    <property type="evidence" value="ECO:0007669"/>
    <property type="project" value="UniProtKB-UniRule"/>
</dbReference>
<dbReference type="GO" id="GO:0046872">
    <property type="term" value="F:metal ion binding"/>
    <property type="evidence" value="ECO:0007669"/>
    <property type="project" value="UniProtKB-KW"/>
</dbReference>
<dbReference type="GO" id="GO:0000917">
    <property type="term" value="P:division septum assembly"/>
    <property type="evidence" value="ECO:0007669"/>
    <property type="project" value="UniProtKB-KW"/>
</dbReference>
<dbReference type="CDD" id="cd01876">
    <property type="entry name" value="YihA_EngB"/>
    <property type="match status" value="1"/>
</dbReference>
<dbReference type="FunFam" id="3.40.50.300:FF:000098">
    <property type="entry name" value="Probable GTP-binding protein EngB"/>
    <property type="match status" value="1"/>
</dbReference>
<dbReference type="Gene3D" id="3.40.50.300">
    <property type="entry name" value="P-loop containing nucleotide triphosphate hydrolases"/>
    <property type="match status" value="1"/>
</dbReference>
<dbReference type="HAMAP" id="MF_00321">
    <property type="entry name" value="GTPase_EngB"/>
    <property type="match status" value="1"/>
</dbReference>
<dbReference type="InterPro" id="IPR030393">
    <property type="entry name" value="G_ENGB_dom"/>
</dbReference>
<dbReference type="InterPro" id="IPR006073">
    <property type="entry name" value="GTP-bd"/>
</dbReference>
<dbReference type="InterPro" id="IPR019987">
    <property type="entry name" value="GTP-bd_ribosome_bio_YsxC"/>
</dbReference>
<dbReference type="InterPro" id="IPR027417">
    <property type="entry name" value="P-loop_NTPase"/>
</dbReference>
<dbReference type="NCBIfam" id="TIGR03598">
    <property type="entry name" value="GTPase_YsxC"/>
    <property type="match status" value="1"/>
</dbReference>
<dbReference type="PANTHER" id="PTHR11649:SF13">
    <property type="entry name" value="ENGB-TYPE G DOMAIN-CONTAINING PROTEIN"/>
    <property type="match status" value="1"/>
</dbReference>
<dbReference type="PANTHER" id="PTHR11649">
    <property type="entry name" value="MSS1/TRME-RELATED GTP-BINDING PROTEIN"/>
    <property type="match status" value="1"/>
</dbReference>
<dbReference type="Pfam" id="PF01926">
    <property type="entry name" value="MMR_HSR1"/>
    <property type="match status" value="1"/>
</dbReference>
<dbReference type="SUPFAM" id="SSF52540">
    <property type="entry name" value="P-loop containing nucleoside triphosphate hydrolases"/>
    <property type="match status" value="1"/>
</dbReference>
<dbReference type="PROSITE" id="PS51706">
    <property type="entry name" value="G_ENGB"/>
    <property type="match status" value="1"/>
</dbReference>
<protein>
    <recommendedName>
        <fullName evidence="1">Probable GTP-binding protein EngB</fullName>
    </recommendedName>
</protein>
<keyword id="KW-0131">Cell cycle</keyword>
<keyword id="KW-0132">Cell division</keyword>
<keyword id="KW-0342">GTP-binding</keyword>
<keyword id="KW-0460">Magnesium</keyword>
<keyword id="KW-0479">Metal-binding</keyword>
<keyword id="KW-0547">Nucleotide-binding</keyword>
<keyword id="KW-0717">Septation</keyword>
<evidence type="ECO:0000255" key="1">
    <source>
        <dbReference type="HAMAP-Rule" id="MF_00321"/>
    </source>
</evidence>
<feature type="chain" id="PRO_1000205134" description="Probable GTP-binding protein EngB">
    <location>
        <begin position="1"/>
        <end position="211"/>
    </location>
</feature>
<feature type="domain" description="EngB-type G" evidence="1">
    <location>
        <begin position="26"/>
        <end position="200"/>
    </location>
</feature>
<feature type="binding site" evidence="1">
    <location>
        <begin position="34"/>
        <end position="41"/>
    </location>
    <ligand>
        <name>GTP</name>
        <dbReference type="ChEBI" id="CHEBI:37565"/>
    </ligand>
</feature>
<feature type="binding site" evidence="1">
    <location>
        <position position="41"/>
    </location>
    <ligand>
        <name>Mg(2+)</name>
        <dbReference type="ChEBI" id="CHEBI:18420"/>
    </ligand>
</feature>
<feature type="binding site" evidence="1">
    <location>
        <begin position="61"/>
        <end position="65"/>
    </location>
    <ligand>
        <name>GTP</name>
        <dbReference type="ChEBI" id="CHEBI:37565"/>
    </ligand>
</feature>
<feature type="binding site" evidence="1">
    <location>
        <position position="63"/>
    </location>
    <ligand>
        <name>Mg(2+)</name>
        <dbReference type="ChEBI" id="CHEBI:18420"/>
    </ligand>
</feature>
<feature type="binding site" evidence="1">
    <location>
        <begin position="79"/>
        <end position="82"/>
    </location>
    <ligand>
        <name>GTP</name>
        <dbReference type="ChEBI" id="CHEBI:37565"/>
    </ligand>
</feature>
<feature type="binding site" evidence="1">
    <location>
        <begin position="146"/>
        <end position="149"/>
    </location>
    <ligand>
        <name>GTP</name>
        <dbReference type="ChEBI" id="CHEBI:37565"/>
    </ligand>
</feature>
<feature type="binding site" evidence="1">
    <location>
        <begin position="179"/>
        <end position="181"/>
    </location>
    <ligand>
        <name>GTP</name>
        <dbReference type="ChEBI" id="CHEBI:37565"/>
    </ligand>
</feature>